<accession>Q87C90</accession>
<proteinExistence type="inferred from homology"/>
<evidence type="ECO:0000250" key="1"/>
<evidence type="ECO:0000255" key="2">
    <source>
        <dbReference type="PROSITE-ProRule" id="PRU00441"/>
    </source>
</evidence>
<evidence type="ECO:0000305" key="3"/>
<comment type="function">
    <text evidence="1">Part of a binding-protein-dependent transport system for phosphate; probably responsible for the translocation of the substrate across the membrane.</text>
</comment>
<comment type="subcellular location">
    <subcellularLocation>
        <location evidence="1">Cell inner membrane</location>
        <topology evidence="2">Multi-pass membrane protein</topology>
    </subcellularLocation>
</comment>
<comment type="similarity">
    <text evidence="3">Belongs to the binding-protein-dependent transport system permease family. CysTW subfamily.</text>
</comment>
<reference key="1">
    <citation type="journal article" date="2003" name="J. Bacteriol.">
        <title>Comparative analyses of the complete genome sequences of Pierce's disease and citrus variegated chlorosis strains of Xylella fastidiosa.</title>
        <authorList>
            <person name="Van Sluys M.A."/>
            <person name="de Oliveira M.C."/>
            <person name="Monteiro-Vitorello C.B."/>
            <person name="Miyaki C.Y."/>
            <person name="Furlan L.R."/>
            <person name="Camargo L.E.A."/>
            <person name="da Silva A.C.R."/>
            <person name="Moon D.H."/>
            <person name="Takita M.A."/>
            <person name="Lemos E.G.M."/>
            <person name="Machado M.A."/>
            <person name="Ferro M.I.T."/>
            <person name="da Silva F.R."/>
            <person name="Goldman M.H.S."/>
            <person name="Goldman G.H."/>
            <person name="Lemos M.V.F."/>
            <person name="El-Dorry H."/>
            <person name="Tsai S.M."/>
            <person name="Carrer H."/>
            <person name="Carraro D.M."/>
            <person name="de Oliveira R.C."/>
            <person name="Nunes L.R."/>
            <person name="Siqueira W.J."/>
            <person name="Coutinho L.L."/>
            <person name="Kimura E.T."/>
            <person name="Ferro E.S."/>
            <person name="Harakava R."/>
            <person name="Kuramae E.E."/>
            <person name="Marino C.L."/>
            <person name="Giglioti E."/>
            <person name="Abreu I.L."/>
            <person name="Alves L.M.C."/>
            <person name="do Amaral A.M."/>
            <person name="Baia G.S."/>
            <person name="Blanco S.R."/>
            <person name="Brito M.S."/>
            <person name="Cannavan F.S."/>
            <person name="Celestino A.V."/>
            <person name="da Cunha A.F."/>
            <person name="Fenille R.C."/>
            <person name="Ferro J.A."/>
            <person name="Formighieri E.F."/>
            <person name="Kishi L.T."/>
            <person name="Leoni S.G."/>
            <person name="Oliveira A.R."/>
            <person name="Rosa V.E. Jr."/>
            <person name="Sassaki F.T."/>
            <person name="Sena J.A.D."/>
            <person name="de Souza A.A."/>
            <person name="Truffi D."/>
            <person name="Tsukumo F."/>
            <person name="Yanai G.M."/>
            <person name="Zaros L.G."/>
            <person name="Civerolo E.L."/>
            <person name="Simpson A.J.G."/>
            <person name="Almeida N.F. Jr."/>
            <person name="Setubal J.C."/>
            <person name="Kitajima J.P."/>
        </authorList>
    </citation>
    <scope>NUCLEOTIDE SEQUENCE [LARGE SCALE GENOMIC DNA]</scope>
    <source>
        <strain>Temecula1 / ATCC 700964</strain>
    </source>
</reference>
<keyword id="KW-0997">Cell inner membrane</keyword>
<keyword id="KW-1003">Cell membrane</keyword>
<keyword id="KW-0472">Membrane</keyword>
<keyword id="KW-0592">Phosphate transport</keyword>
<keyword id="KW-1185">Reference proteome</keyword>
<keyword id="KW-0812">Transmembrane</keyword>
<keyword id="KW-1133">Transmembrane helix</keyword>
<keyword id="KW-0813">Transport</keyword>
<sequence length="324" mass="34976">MTSTLIPKETSTPGGRDLRDARADYFFKLLLTAAVAFVLIALVSAALSMLWGGRQALQLQGVSFFYSTEWNPVENKYGALTPIYGTIVTALIAMLIAMPVSLGIAFFLTEVAPRWLRTPIGTAIELLAGIPSIIYGMWGLFVLVPVMTDYITPFLNDHIGTLPLIGTLFQGPPLGIGTLTAGFVLAIMVIPFISSMMREVFLTVPTQLKESAYALGSTKWEVSWNIVLPYTRSAVIGGMFLGLGRALGETMAVAFVIGNSVRLSPSLLTPGTTIAALIANDFGEATETYRSALLLLGFVLFIVTFAVLVIARLMLLRLSRKEGN</sequence>
<protein>
    <recommendedName>
        <fullName>Phosphate transport system permease protein PstC</fullName>
    </recommendedName>
</protein>
<feature type="chain" id="PRO_0000060214" description="Phosphate transport system permease protein PstC">
    <location>
        <begin position="1"/>
        <end position="324"/>
    </location>
</feature>
<feature type="transmembrane region" description="Helical" evidence="2">
    <location>
        <begin position="29"/>
        <end position="49"/>
    </location>
</feature>
<feature type="transmembrane region" description="Helical" evidence="2">
    <location>
        <begin position="87"/>
        <end position="107"/>
    </location>
</feature>
<feature type="transmembrane region" description="Helical" evidence="2">
    <location>
        <begin position="126"/>
        <end position="146"/>
    </location>
</feature>
<feature type="transmembrane region" description="Helical" evidence="2">
    <location>
        <begin position="173"/>
        <end position="193"/>
    </location>
</feature>
<feature type="transmembrane region" description="Helical" evidence="2">
    <location>
        <begin position="235"/>
        <end position="255"/>
    </location>
</feature>
<feature type="transmembrane region" description="Helical" evidence="2">
    <location>
        <begin position="291"/>
        <end position="311"/>
    </location>
</feature>
<feature type="domain" description="ABC transmembrane type-1" evidence="2">
    <location>
        <begin position="83"/>
        <end position="311"/>
    </location>
</feature>
<organism>
    <name type="scientific">Xylella fastidiosa (strain Temecula1 / ATCC 700964)</name>
    <dbReference type="NCBI Taxonomy" id="183190"/>
    <lineage>
        <taxon>Bacteria</taxon>
        <taxon>Pseudomonadati</taxon>
        <taxon>Pseudomonadota</taxon>
        <taxon>Gammaproteobacteria</taxon>
        <taxon>Lysobacterales</taxon>
        <taxon>Lysobacteraceae</taxon>
        <taxon>Xylella</taxon>
    </lineage>
</organism>
<dbReference type="EMBL" id="AE009442">
    <property type="protein sequence ID" value="AAO29054.1"/>
    <property type="molecule type" value="Genomic_DNA"/>
</dbReference>
<dbReference type="RefSeq" id="WP_004086093.1">
    <property type="nucleotide sequence ID" value="NC_004556.1"/>
</dbReference>
<dbReference type="GeneID" id="93905003"/>
<dbReference type="KEGG" id="xft:PD_1203"/>
<dbReference type="HOGENOM" id="CLU_033621_1_3_6"/>
<dbReference type="Proteomes" id="UP000002516">
    <property type="component" value="Chromosome"/>
</dbReference>
<dbReference type="GO" id="GO:0005886">
    <property type="term" value="C:plasma membrane"/>
    <property type="evidence" value="ECO:0007669"/>
    <property type="project" value="UniProtKB-SubCell"/>
</dbReference>
<dbReference type="GO" id="GO:0005315">
    <property type="term" value="F:phosphate transmembrane transporter activity"/>
    <property type="evidence" value="ECO:0007669"/>
    <property type="project" value="InterPro"/>
</dbReference>
<dbReference type="GO" id="GO:0006817">
    <property type="term" value="P:phosphate ion transport"/>
    <property type="evidence" value="ECO:0007669"/>
    <property type="project" value="UniProtKB-KW"/>
</dbReference>
<dbReference type="CDD" id="cd06261">
    <property type="entry name" value="TM_PBP2"/>
    <property type="match status" value="1"/>
</dbReference>
<dbReference type="Gene3D" id="1.10.3720.10">
    <property type="entry name" value="MetI-like"/>
    <property type="match status" value="1"/>
</dbReference>
<dbReference type="InterPro" id="IPR000515">
    <property type="entry name" value="MetI-like"/>
</dbReference>
<dbReference type="InterPro" id="IPR035906">
    <property type="entry name" value="MetI-like_sf"/>
</dbReference>
<dbReference type="InterPro" id="IPR011864">
    <property type="entry name" value="Phosphate_PstC"/>
</dbReference>
<dbReference type="InterPro" id="IPR051124">
    <property type="entry name" value="Phosphate_Transport_Permease"/>
</dbReference>
<dbReference type="NCBIfam" id="TIGR02138">
    <property type="entry name" value="phosphate_pstC"/>
    <property type="match status" value="1"/>
</dbReference>
<dbReference type="PANTHER" id="PTHR30425">
    <property type="entry name" value="PHOSPHATE TRANSPORT SYSTEM PERMEASE PROTEIN PST"/>
    <property type="match status" value="1"/>
</dbReference>
<dbReference type="PANTHER" id="PTHR30425:SF1">
    <property type="entry name" value="PHOSPHATE TRANSPORT SYSTEM PERMEASE PROTEIN PSTC"/>
    <property type="match status" value="1"/>
</dbReference>
<dbReference type="Pfam" id="PF00528">
    <property type="entry name" value="BPD_transp_1"/>
    <property type="match status" value="1"/>
</dbReference>
<dbReference type="SUPFAM" id="SSF161098">
    <property type="entry name" value="MetI-like"/>
    <property type="match status" value="1"/>
</dbReference>
<dbReference type="PROSITE" id="PS50928">
    <property type="entry name" value="ABC_TM1"/>
    <property type="match status" value="1"/>
</dbReference>
<name>PSTC_XYLFT</name>
<gene>
    <name type="primary">pstC</name>
    <name type="ordered locus">PD_1203</name>
</gene>